<organism>
    <name type="scientific">Homo sapiens</name>
    <name type="common">Human</name>
    <dbReference type="NCBI Taxonomy" id="9606"/>
    <lineage>
        <taxon>Eukaryota</taxon>
        <taxon>Metazoa</taxon>
        <taxon>Chordata</taxon>
        <taxon>Craniata</taxon>
        <taxon>Vertebrata</taxon>
        <taxon>Euteleostomi</taxon>
        <taxon>Mammalia</taxon>
        <taxon>Eutheria</taxon>
        <taxon>Euarchontoglires</taxon>
        <taxon>Primates</taxon>
        <taxon>Haplorrhini</taxon>
        <taxon>Catarrhini</taxon>
        <taxon>Hominidae</taxon>
        <taxon>Homo</taxon>
    </lineage>
</organism>
<proteinExistence type="evidence at protein level"/>
<dbReference type="EC" id="3.2.1.17"/>
<dbReference type="EMBL" id="AF088219">
    <property type="protein sequence ID" value="AAC63332.1"/>
    <property type="molecule type" value="Genomic_DNA"/>
</dbReference>
<dbReference type="EMBL" id="AY742214">
    <property type="protein sequence ID" value="AAU93343.1"/>
    <property type="molecule type" value="mRNA"/>
</dbReference>
<dbReference type="EMBL" id="AY359018">
    <property type="protein sequence ID" value="AAQ89377.1"/>
    <property type="molecule type" value="mRNA"/>
</dbReference>
<dbReference type="EMBL" id="BC054481">
    <property type="protein sequence ID" value="AAH54481.1"/>
    <property type="molecule type" value="mRNA"/>
</dbReference>
<dbReference type="CCDS" id="CCDS11302.1"/>
<dbReference type="RefSeq" id="NP_001186880.1">
    <property type="nucleotide sequence ID" value="NM_001199951.3"/>
</dbReference>
<dbReference type="RefSeq" id="NP_065159.1">
    <property type="nucleotide sequence ID" value="NM_020426.4"/>
</dbReference>
<dbReference type="SMR" id="O75951"/>
<dbReference type="BioGRID" id="121408">
    <property type="interactions" value="41"/>
</dbReference>
<dbReference type="FunCoup" id="O75951">
    <property type="interactions" value="9"/>
</dbReference>
<dbReference type="IntAct" id="O75951">
    <property type="interactions" value="32"/>
</dbReference>
<dbReference type="MINT" id="O75951"/>
<dbReference type="STRING" id="9606.ENSP00000483897"/>
<dbReference type="CAZy" id="GH22">
    <property type="family name" value="Glycoside Hydrolase Family 22"/>
</dbReference>
<dbReference type="iPTMnet" id="O75951"/>
<dbReference type="PhosphoSitePlus" id="O75951"/>
<dbReference type="BioMuta" id="LYZL6"/>
<dbReference type="MassIVE" id="O75951"/>
<dbReference type="PaxDb" id="9606-ENSP00000483897"/>
<dbReference type="PeptideAtlas" id="O75951"/>
<dbReference type="ProteomicsDB" id="50312"/>
<dbReference type="Antibodypedia" id="72609">
    <property type="antibodies" value="156 antibodies from 24 providers"/>
</dbReference>
<dbReference type="DNASU" id="57151"/>
<dbReference type="Ensembl" id="ENST00000612374.2">
    <property type="protein sequence ID" value="ENSP00000483358.1"/>
    <property type="gene ID" value="ENSG00000277042.2"/>
</dbReference>
<dbReference type="Ensembl" id="ENST00000615905.5">
    <property type="protein sequence ID" value="ENSP00000483897.1"/>
    <property type="gene ID" value="ENSG00000275722.5"/>
</dbReference>
<dbReference type="Ensembl" id="ENST00000618542.4">
    <property type="protein sequence ID" value="ENSP00000482955.1"/>
    <property type="gene ID" value="ENSG00000275722.5"/>
</dbReference>
<dbReference type="Ensembl" id="ENST00000632590.1">
    <property type="protein sequence ID" value="ENSP00000488304.1"/>
    <property type="gene ID" value="ENSG00000277042.2"/>
</dbReference>
<dbReference type="GeneID" id="57151"/>
<dbReference type="KEGG" id="hsa:57151"/>
<dbReference type="MANE-Select" id="ENST00000615905.5">
    <property type="protein sequence ID" value="ENSP00000483897.1"/>
    <property type="RefSeq nucleotide sequence ID" value="NM_020426.4"/>
    <property type="RefSeq protein sequence ID" value="NP_065159.1"/>
</dbReference>
<dbReference type="UCSC" id="uc002hkk.3">
    <property type="organism name" value="human"/>
</dbReference>
<dbReference type="AGR" id="HGNC:29614"/>
<dbReference type="CTD" id="57151"/>
<dbReference type="DisGeNET" id="57151"/>
<dbReference type="GeneCards" id="LYZL6"/>
<dbReference type="HGNC" id="HGNC:29614">
    <property type="gene designation" value="LYZL6"/>
</dbReference>
<dbReference type="HPA" id="ENSG00000275722">
    <property type="expression patterns" value="Tissue enriched (testis)"/>
</dbReference>
<dbReference type="MIM" id="612751">
    <property type="type" value="gene"/>
</dbReference>
<dbReference type="neXtProt" id="NX_O75951"/>
<dbReference type="OpenTargets" id="ENSG00000275722"/>
<dbReference type="PharmGKB" id="PA134942111"/>
<dbReference type="VEuPathDB" id="HostDB:ENSG00000275722"/>
<dbReference type="eggNOG" id="ENOG502SCGK">
    <property type="taxonomic scope" value="Eukaryota"/>
</dbReference>
<dbReference type="GeneTree" id="ENSGT00940000161690"/>
<dbReference type="HOGENOM" id="CLU_111620_1_1_1"/>
<dbReference type="InParanoid" id="O75951"/>
<dbReference type="OMA" id="EWRLHCA"/>
<dbReference type="OrthoDB" id="17373at2759"/>
<dbReference type="PAN-GO" id="O75951">
    <property type="GO annotations" value="4 GO annotations based on evolutionary models"/>
</dbReference>
<dbReference type="PhylomeDB" id="O75951"/>
<dbReference type="TreeFam" id="TF324882"/>
<dbReference type="PathwayCommons" id="O75951"/>
<dbReference type="BioGRID-ORCS" id="57151">
    <property type="hits" value="29 hits in 1132 CRISPR screens"/>
</dbReference>
<dbReference type="GenomeRNAi" id="57151"/>
<dbReference type="Pharos" id="O75951">
    <property type="development level" value="Tbio"/>
</dbReference>
<dbReference type="PRO" id="PR:O75951"/>
<dbReference type="Proteomes" id="UP000005640">
    <property type="component" value="Chromosome 17"/>
</dbReference>
<dbReference type="RNAct" id="O75951">
    <property type="molecule type" value="protein"/>
</dbReference>
<dbReference type="Bgee" id="ENSG00000275722">
    <property type="expression patterns" value="Expressed in left testis and 40 other cell types or tissues"/>
</dbReference>
<dbReference type="ExpressionAtlas" id="O75951">
    <property type="expression patterns" value="baseline and differential"/>
</dbReference>
<dbReference type="GO" id="GO:0001669">
    <property type="term" value="C:acrosomal vesicle"/>
    <property type="evidence" value="ECO:0000318"/>
    <property type="project" value="GO_Central"/>
</dbReference>
<dbReference type="GO" id="GO:0009986">
    <property type="term" value="C:cell surface"/>
    <property type="evidence" value="ECO:0007669"/>
    <property type="project" value="UniProtKB-SubCell"/>
</dbReference>
<dbReference type="GO" id="GO:0005576">
    <property type="term" value="C:extracellular region"/>
    <property type="evidence" value="ECO:0007669"/>
    <property type="project" value="UniProtKB-SubCell"/>
</dbReference>
<dbReference type="GO" id="GO:0036126">
    <property type="term" value="C:sperm flagellum"/>
    <property type="evidence" value="ECO:0000318"/>
    <property type="project" value="GO_Central"/>
</dbReference>
<dbReference type="GO" id="GO:0097225">
    <property type="term" value="C:sperm midpiece"/>
    <property type="evidence" value="ECO:0000250"/>
    <property type="project" value="UniProtKB"/>
</dbReference>
<dbReference type="GO" id="GO:0097524">
    <property type="term" value="C:sperm plasma membrane"/>
    <property type="evidence" value="ECO:0000314"/>
    <property type="project" value="UniProtKB"/>
</dbReference>
<dbReference type="GO" id="GO:0003796">
    <property type="term" value="F:lysozyme activity"/>
    <property type="evidence" value="ECO:0000318"/>
    <property type="project" value="GO_Central"/>
</dbReference>
<dbReference type="GO" id="GO:0042742">
    <property type="term" value="P:defense response to bacterium"/>
    <property type="evidence" value="ECO:0000315"/>
    <property type="project" value="UniProtKB"/>
</dbReference>
<dbReference type="GO" id="GO:0009566">
    <property type="term" value="P:fertilization"/>
    <property type="evidence" value="ECO:0000315"/>
    <property type="project" value="UniProtKB"/>
</dbReference>
<dbReference type="GO" id="GO:0007342">
    <property type="term" value="P:fusion of sperm to egg plasma membrane involved in single fertilization"/>
    <property type="evidence" value="ECO:0000315"/>
    <property type="project" value="UniProtKB"/>
</dbReference>
<dbReference type="GO" id="GO:0031640">
    <property type="term" value="P:killing of cells of another organism"/>
    <property type="evidence" value="ECO:0007669"/>
    <property type="project" value="UniProtKB-KW"/>
</dbReference>
<dbReference type="CDD" id="cd16897">
    <property type="entry name" value="LYZ_C"/>
    <property type="match status" value="1"/>
</dbReference>
<dbReference type="FunFam" id="1.10.530.10:FF:000001">
    <property type="entry name" value="Lysozyme C"/>
    <property type="match status" value="1"/>
</dbReference>
<dbReference type="Gene3D" id="1.10.530.10">
    <property type="match status" value="1"/>
</dbReference>
<dbReference type="InterPro" id="IPR001916">
    <property type="entry name" value="Glyco_hydro_22"/>
</dbReference>
<dbReference type="InterPro" id="IPR019799">
    <property type="entry name" value="Glyco_hydro_22_CS"/>
</dbReference>
<dbReference type="InterPro" id="IPR000974">
    <property type="entry name" value="Glyco_hydro_22_lys"/>
</dbReference>
<dbReference type="InterPro" id="IPR023346">
    <property type="entry name" value="Lysozyme-like_dom_sf"/>
</dbReference>
<dbReference type="PANTHER" id="PTHR11407">
    <property type="entry name" value="LYSOZYME C"/>
    <property type="match status" value="1"/>
</dbReference>
<dbReference type="PANTHER" id="PTHR11407:SF9">
    <property type="entry name" value="LYSOZYME-LIKE PROTEIN 6"/>
    <property type="match status" value="1"/>
</dbReference>
<dbReference type="Pfam" id="PF00062">
    <property type="entry name" value="Lys"/>
    <property type="match status" value="1"/>
</dbReference>
<dbReference type="PRINTS" id="PR00137">
    <property type="entry name" value="LYSOZYME"/>
</dbReference>
<dbReference type="PRINTS" id="PR00135">
    <property type="entry name" value="LYZLACT"/>
</dbReference>
<dbReference type="SMART" id="SM00263">
    <property type="entry name" value="LYZ1"/>
    <property type="match status" value="1"/>
</dbReference>
<dbReference type="SUPFAM" id="SSF53955">
    <property type="entry name" value="Lysozyme-like"/>
    <property type="match status" value="1"/>
</dbReference>
<dbReference type="PROSITE" id="PS00128">
    <property type="entry name" value="GLYCOSYL_HYDROL_F22_1"/>
    <property type="match status" value="1"/>
</dbReference>
<dbReference type="PROSITE" id="PS51348">
    <property type="entry name" value="GLYCOSYL_HYDROL_F22_2"/>
    <property type="match status" value="1"/>
</dbReference>
<accession>O75951</accession>
<accession>Q6UW30</accession>
<name>LYZL6_HUMAN</name>
<evidence type="ECO:0000250" key="1">
    <source>
        <dbReference type="UniProtKB" id="Q9DA11"/>
    </source>
</evidence>
<evidence type="ECO:0000255" key="2"/>
<evidence type="ECO:0000255" key="3">
    <source>
        <dbReference type="PROSITE-ProRule" id="PRU00680"/>
    </source>
</evidence>
<evidence type="ECO:0000269" key="4">
    <source>
    </source>
</evidence>
<evidence type="ECO:0000269" key="5">
    <source>
    </source>
</evidence>
<evidence type="ECO:0000269" key="6">
    <source>
    </source>
</evidence>
<evidence type="ECO:0000269" key="7">
    <source>
    </source>
</evidence>
<evidence type="ECO:0000305" key="8"/>
<gene>
    <name type="primary">LYZL6</name>
    <name type="synonym">LYC1</name>
    <name type="ORF">UNQ754/PRO1485</name>
</gene>
<reference key="1">
    <citation type="journal article" date="1999" name="J. Interferon Cytokine Res.">
        <title>Organization of the chemokine gene cluster on human chromosome 17q11.2 containing the genes for CC chemokine MPIF-1, HCC-2, LEC, and RANTES.</title>
        <authorList>
            <person name="Nomiyama H."/>
            <person name="Fukuda S."/>
            <person name="Iio M."/>
            <person name="Tanase S."/>
            <person name="Miura R."/>
            <person name="Yoshie O."/>
        </authorList>
    </citation>
    <scope>NUCLEOTIDE SEQUENCE [GENOMIC DNA]</scope>
</reference>
<reference key="2">
    <citation type="journal article" date="2005" name="Biol. Reprod.">
        <title>Molecular cloning and characterization of three novel lysozyme-like genes, predominantly expressed in the male reproductive system of humans, belonging to the c-type lysozyme/alpha-lactalbumin family.</title>
        <authorList>
            <person name="Zhang K."/>
            <person name="Gao R."/>
            <person name="Zhang H."/>
            <person name="Cai X."/>
            <person name="Shen C."/>
            <person name="Wu C."/>
            <person name="Zhao S."/>
            <person name="Yu L."/>
        </authorList>
    </citation>
    <scope>NUCLEOTIDE SEQUENCE [MRNA]</scope>
    <scope>TISSUE SPECIFICITY</scope>
    <source>
        <tissue>Testis</tissue>
    </source>
</reference>
<reference key="3">
    <citation type="journal article" date="2003" name="Genome Res.">
        <title>The secreted protein discovery initiative (SPDI), a large-scale effort to identify novel human secreted and transmembrane proteins: a bioinformatics assessment.</title>
        <authorList>
            <person name="Clark H.F."/>
            <person name="Gurney A.L."/>
            <person name="Abaya E."/>
            <person name="Baker K."/>
            <person name="Baldwin D.T."/>
            <person name="Brush J."/>
            <person name="Chen J."/>
            <person name="Chow B."/>
            <person name="Chui C."/>
            <person name="Crowley C."/>
            <person name="Currell B."/>
            <person name="Deuel B."/>
            <person name="Dowd P."/>
            <person name="Eaton D."/>
            <person name="Foster J.S."/>
            <person name="Grimaldi C."/>
            <person name="Gu Q."/>
            <person name="Hass P.E."/>
            <person name="Heldens S."/>
            <person name="Huang A."/>
            <person name="Kim H.S."/>
            <person name="Klimowski L."/>
            <person name="Jin Y."/>
            <person name="Johnson S."/>
            <person name="Lee J."/>
            <person name="Lewis L."/>
            <person name="Liao D."/>
            <person name="Mark M.R."/>
            <person name="Robbie E."/>
            <person name="Sanchez C."/>
            <person name="Schoenfeld J."/>
            <person name="Seshagiri S."/>
            <person name="Simmons L."/>
            <person name="Singh J."/>
            <person name="Smith V."/>
            <person name="Stinson J."/>
            <person name="Vagts A."/>
            <person name="Vandlen R.L."/>
            <person name="Watanabe C."/>
            <person name="Wieand D."/>
            <person name="Woods K."/>
            <person name="Xie M.-H."/>
            <person name="Yansura D.G."/>
            <person name="Yi S."/>
            <person name="Yu G."/>
            <person name="Yuan J."/>
            <person name="Zhang M."/>
            <person name="Zhang Z."/>
            <person name="Goddard A.D."/>
            <person name="Wood W.I."/>
            <person name="Godowski P.J."/>
            <person name="Gray A.M."/>
        </authorList>
    </citation>
    <scope>NUCLEOTIDE SEQUENCE [LARGE SCALE MRNA]</scope>
    <scope>VARIANT SER-139</scope>
</reference>
<reference key="4">
    <citation type="journal article" date="2004" name="Genome Res.">
        <title>The status, quality, and expansion of the NIH full-length cDNA project: the Mammalian Gene Collection (MGC).</title>
        <authorList>
            <consortium name="The MGC Project Team"/>
        </authorList>
    </citation>
    <scope>NUCLEOTIDE SEQUENCE [LARGE SCALE MRNA]</scope>
    <source>
        <tissue>Testis</tissue>
    </source>
</reference>
<reference key="5">
    <citation type="journal article" date="2013" name="Asian J. Androl.">
        <title>Characterisation of Lyzls in mice and antibacterial properties of human LYZL6.</title>
        <authorList>
            <person name="Wei J."/>
            <person name="Li S.J."/>
            <person name="Shi H."/>
            <person name="Wang H.Y."/>
            <person name="Rong C.T."/>
            <person name="Zhu P."/>
            <person name="Jin S.H."/>
            <person name="Liu J."/>
            <person name="Li J.Y."/>
        </authorList>
    </citation>
    <scope>BACTERIOLYTIC ACTIVITY</scope>
</reference>
<reference key="6">
    <citation type="journal article" date="2017" name="PLoS ONE">
        <title>LYZL6, an acidic, bacteriolytic, human sperm-related protein, plays a role in fertilization.</title>
        <authorList>
            <person name="Huang P."/>
            <person name="Li W."/>
            <person name="Yang Z."/>
            <person name="Zhang N."/>
            <person name="Xu Y."/>
            <person name="Bao J."/>
            <person name="Jiang D."/>
            <person name="Dong X."/>
        </authorList>
    </citation>
    <scope>TISSUE SPECIFICITY</scope>
    <scope>SUBCELLULAR LOCATION</scope>
    <scope>IDENTIFICATION BY MASS SPECTROMETRY</scope>
    <scope>FUNCTION</scope>
</reference>
<feature type="signal peptide" evidence="2">
    <location>
        <begin position="1"/>
        <end position="19"/>
    </location>
</feature>
<feature type="chain" id="PRO_0000240640" description="Lysozyme-like protein 6">
    <location>
        <begin position="20"/>
        <end position="148"/>
    </location>
</feature>
<feature type="domain" description="C-type lysozyme" evidence="3">
    <location>
        <begin position="20"/>
        <end position="148"/>
    </location>
</feature>
<feature type="active site" evidence="3">
    <location>
        <position position="54"/>
    </location>
</feature>
<feature type="active site" evidence="3">
    <location>
        <position position="71"/>
    </location>
</feature>
<feature type="disulfide bond" evidence="3">
    <location>
        <begin position="25"/>
        <end position="145"/>
    </location>
</feature>
<feature type="disulfide bond" evidence="3">
    <location>
        <begin position="49"/>
        <end position="133"/>
    </location>
</feature>
<feature type="disulfide bond" evidence="3">
    <location>
        <begin position="83"/>
        <end position="98"/>
    </location>
</feature>
<feature type="disulfide bond" evidence="3">
    <location>
        <begin position="94"/>
        <end position="112"/>
    </location>
</feature>
<feature type="sequence variant" id="VAR_026819" description="In dbSNP:rs9754." evidence="4">
    <original>F</original>
    <variation>S</variation>
    <location>
        <position position="139"/>
    </location>
</feature>
<sequence length="148" mass="16956">MTKALLIYLVSSFLALNQASLISRCDLAQVLQLEDLDGFEGYSLSDWLCLAFVESKFNISKINENADGSFDYGLFQINSHYWCNDYKSYSENLCHVDCQDLLNPNLLAGIHCAKRIVSGARGMNNWVEWRLHCSGRPLFYWLTGCRLR</sequence>
<protein>
    <recommendedName>
        <fullName>Lysozyme-like protein 6</fullName>
        <ecNumber>3.2.1.17</ecNumber>
    </recommendedName>
</protein>
<keyword id="KW-0929">Antimicrobial</keyword>
<keyword id="KW-0081">Bacteriolytic enzyme</keyword>
<keyword id="KW-0966">Cell projection</keyword>
<keyword id="KW-0969">Cilium</keyword>
<keyword id="KW-1015">Disulfide bond</keyword>
<keyword id="KW-0278">Fertilization</keyword>
<keyword id="KW-0282">Flagellum</keyword>
<keyword id="KW-0326">Glycosidase</keyword>
<keyword id="KW-0378">Hydrolase</keyword>
<keyword id="KW-1267">Proteomics identification</keyword>
<keyword id="KW-1185">Reference proteome</keyword>
<keyword id="KW-0964">Secreted</keyword>
<keyword id="KW-0732">Signal</keyword>
<comment type="function">
    <text evidence="6 7">May be involved sperm-egg plasma membrane adhesion and fusion during fertilization (PubMed:28182716). Exhibits bacteriolytic activity in vitro against Micrococcus luteus and Staphylococcus aureus (PubMed:24013621, PubMed:28182716). Shows weak bacteriolytic activity against Gram-positive bacteria at physiological pH (PubMed:28182716). Bacteriolytic activity is pH-dependent, with a maximum at around pH 5.6 (PubMed:28182716).</text>
</comment>
<comment type="catalytic activity">
    <reaction>
        <text>Hydrolysis of (1-&gt;4)-beta-linkages between N-acetylmuramic acid and N-acetyl-D-glucosamine residues in a peptidoglycan and between N-acetyl-D-glucosamine residues in chitodextrins.</text>
        <dbReference type="EC" id="3.2.1.17"/>
    </reaction>
</comment>
<comment type="subunit">
    <text evidence="8">Monomer.</text>
</comment>
<comment type="subcellular location">
    <subcellularLocation>
        <location evidence="7">Secreted</location>
    </subcellularLocation>
    <subcellularLocation>
        <location evidence="7">Cell surface</location>
    </subcellularLocation>
    <subcellularLocation>
        <location evidence="1">Cell projection</location>
        <location evidence="1">Cilium</location>
        <location evidence="1">Flagellum</location>
    </subcellularLocation>
    <text evidence="7">Detected on the postacrosomal membrane of mature spermatozoa (PubMed:28182716).</text>
</comment>
<comment type="tissue specificity">
    <text evidence="5 7">Expressed in testis, epididymis and spermatozoa (at protein level) (PubMed:16014814, PubMed:28182716). Expressed in late-stage spermatocytes and round spermatids (PubMed:28182716).</text>
</comment>
<comment type="similarity">
    <text evidence="3">Belongs to the glycosyl hydrolase 22 family.</text>
</comment>